<feature type="chain" id="PRO_0000460322" description="RAF-like serine/threonine-protein kinase 24">
    <location>
        <begin position="1"/>
        <end position="1257"/>
    </location>
</feature>
<feature type="domain" description="PB1" evidence="2">
    <location>
        <begin position="191"/>
        <end position="277"/>
    </location>
</feature>
<feature type="domain" description="Protein kinase" evidence="1">
    <location>
        <begin position="974"/>
        <end position="1239"/>
    </location>
</feature>
<feature type="region of interest" description="Disordered" evidence="5">
    <location>
        <begin position="1"/>
        <end position="21"/>
    </location>
</feature>
<feature type="region of interest" description="Disordered" evidence="5">
    <location>
        <begin position="457"/>
        <end position="629"/>
    </location>
</feature>
<feature type="region of interest" description="Disordered" evidence="5">
    <location>
        <begin position="761"/>
        <end position="789"/>
    </location>
</feature>
<feature type="compositionally biased region" description="Basic and acidic residues" evidence="5">
    <location>
        <begin position="457"/>
        <end position="480"/>
    </location>
</feature>
<feature type="compositionally biased region" description="Basic and acidic residues" evidence="5">
    <location>
        <begin position="493"/>
        <end position="502"/>
    </location>
</feature>
<feature type="compositionally biased region" description="Low complexity" evidence="5">
    <location>
        <begin position="533"/>
        <end position="548"/>
    </location>
</feature>
<feature type="compositionally biased region" description="Basic and acidic residues" evidence="5">
    <location>
        <begin position="550"/>
        <end position="576"/>
    </location>
</feature>
<feature type="compositionally biased region" description="Low complexity" evidence="5">
    <location>
        <begin position="583"/>
        <end position="593"/>
    </location>
</feature>
<feature type="compositionally biased region" description="Polar residues" evidence="5">
    <location>
        <begin position="769"/>
        <end position="782"/>
    </location>
</feature>
<feature type="active site" description="Proton acceptor" evidence="1 3">
    <location>
        <position position="1102"/>
    </location>
</feature>
<feature type="binding site" evidence="1">
    <location>
        <begin position="980"/>
        <end position="988"/>
    </location>
    <ligand>
        <name>ATP</name>
        <dbReference type="ChEBI" id="CHEBI:30616"/>
    </ligand>
</feature>
<feature type="binding site" evidence="1 4">
    <location>
        <position position="1001"/>
    </location>
    <ligand>
        <name>ATP</name>
        <dbReference type="ChEBI" id="CHEBI:30616"/>
    </ligand>
</feature>
<feature type="modified residue" description="Phosphoserine" evidence="6">
    <location>
        <position position="474"/>
    </location>
</feature>
<feature type="modified residue" description="Phosphoserine" evidence="6">
    <location>
        <position position="555"/>
    </location>
</feature>
<feature type="modified residue" description="Phosphoserine" evidence="6">
    <location>
        <position position="777"/>
    </location>
</feature>
<feature type="modified residue" description="Phosphoserine" evidence="6">
    <location>
        <position position="1013"/>
    </location>
</feature>
<organism>
    <name type="scientific">Arabidopsis thaliana</name>
    <name type="common">Mouse-ear cress</name>
    <dbReference type="NCBI Taxonomy" id="3702"/>
    <lineage>
        <taxon>Eukaryota</taxon>
        <taxon>Viridiplantae</taxon>
        <taxon>Streptophyta</taxon>
        <taxon>Embryophyta</taxon>
        <taxon>Tracheophyta</taxon>
        <taxon>Spermatophyta</taxon>
        <taxon>Magnoliopsida</taxon>
        <taxon>eudicotyledons</taxon>
        <taxon>Gunneridae</taxon>
        <taxon>Pentapetalae</taxon>
        <taxon>rosids</taxon>
        <taxon>malvids</taxon>
        <taxon>Brassicales</taxon>
        <taxon>Brassicaceae</taxon>
        <taxon>Camelineae</taxon>
        <taxon>Arabidopsis</taxon>
    </lineage>
</organism>
<proteinExistence type="evidence at protein level"/>
<keyword id="KW-0067">ATP-binding</keyword>
<keyword id="KW-0927">Auxin signaling pathway</keyword>
<keyword id="KW-0963">Cytoplasm</keyword>
<keyword id="KW-0418">Kinase</keyword>
<keyword id="KW-0547">Nucleotide-binding</keyword>
<keyword id="KW-0597">Phosphoprotein</keyword>
<keyword id="KW-1185">Reference proteome</keyword>
<keyword id="KW-0723">Serine/threonine-protein kinase</keyword>
<keyword id="KW-0808">Transferase</keyword>
<name>RAF24_ARATH</name>
<accession>O64768</accession>
<dbReference type="EC" id="2.7.11.1" evidence="3"/>
<dbReference type="EMBL" id="AC004238">
    <property type="protein sequence ID" value="AAC12844.1"/>
    <property type="molecule type" value="Genomic_DNA"/>
</dbReference>
<dbReference type="EMBL" id="CP002685">
    <property type="protein sequence ID" value="AEC09056.1"/>
    <property type="molecule type" value="Genomic_DNA"/>
</dbReference>
<dbReference type="EMBL" id="CP002685">
    <property type="protein sequence ID" value="ANM63265.1"/>
    <property type="molecule type" value="Genomic_DNA"/>
</dbReference>
<dbReference type="PIR" id="T00486">
    <property type="entry name" value="T00486"/>
</dbReference>
<dbReference type="RefSeq" id="NP_001325366.1">
    <property type="nucleotide sequence ID" value="NM_001336537.1"/>
</dbReference>
<dbReference type="RefSeq" id="NP_181050.1">
    <property type="nucleotide sequence ID" value="NM_129057.4"/>
</dbReference>
<dbReference type="SMR" id="O64768"/>
<dbReference type="FunCoup" id="O64768">
    <property type="interactions" value="628"/>
</dbReference>
<dbReference type="IntAct" id="O64768">
    <property type="interactions" value="1"/>
</dbReference>
<dbReference type="STRING" id="3702.O64768"/>
<dbReference type="GlyGen" id="O64768">
    <property type="glycosylation" value="2 sites, 1 O-linked glycan (2 sites)"/>
</dbReference>
<dbReference type="iPTMnet" id="O64768"/>
<dbReference type="PaxDb" id="3702-AT2G35050.1"/>
<dbReference type="ProteomicsDB" id="181788"/>
<dbReference type="EnsemblPlants" id="AT2G35050.1">
    <property type="protein sequence ID" value="AT2G35050.1"/>
    <property type="gene ID" value="AT2G35050"/>
</dbReference>
<dbReference type="EnsemblPlants" id="AT2G35050.2">
    <property type="protein sequence ID" value="AT2G35050.2"/>
    <property type="gene ID" value="AT2G35050"/>
</dbReference>
<dbReference type="GeneID" id="818070"/>
<dbReference type="Gramene" id="AT2G35050.1">
    <property type="protein sequence ID" value="AT2G35050.1"/>
    <property type="gene ID" value="AT2G35050"/>
</dbReference>
<dbReference type="Gramene" id="AT2G35050.2">
    <property type="protein sequence ID" value="AT2G35050.2"/>
    <property type="gene ID" value="AT2G35050"/>
</dbReference>
<dbReference type="KEGG" id="ath:AT2G35050"/>
<dbReference type="Araport" id="AT2G35050"/>
<dbReference type="TAIR" id="AT2G35050"/>
<dbReference type="eggNOG" id="KOG0192">
    <property type="taxonomic scope" value="Eukaryota"/>
</dbReference>
<dbReference type="HOGENOM" id="CLU_003108_0_1_1"/>
<dbReference type="OMA" id="INGMDVG"/>
<dbReference type="Proteomes" id="UP000006548">
    <property type="component" value="Chromosome 2"/>
</dbReference>
<dbReference type="ExpressionAtlas" id="O64768">
    <property type="expression patterns" value="baseline and differential"/>
</dbReference>
<dbReference type="GO" id="GO:0005737">
    <property type="term" value="C:cytoplasm"/>
    <property type="evidence" value="ECO:0000314"/>
    <property type="project" value="UniProtKB"/>
</dbReference>
<dbReference type="GO" id="GO:0005524">
    <property type="term" value="F:ATP binding"/>
    <property type="evidence" value="ECO:0007669"/>
    <property type="project" value="UniProtKB-KW"/>
</dbReference>
<dbReference type="GO" id="GO:0004674">
    <property type="term" value="F:protein serine/threonine kinase activity"/>
    <property type="evidence" value="ECO:0007669"/>
    <property type="project" value="UniProtKB-KW"/>
</dbReference>
<dbReference type="GO" id="GO:0004712">
    <property type="term" value="F:protein serine/threonine/tyrosine kinase activity"/>
    <property type="evidence" value="ECO:0000250"/>
    <property type="project" value="TAIR"/>
</dbReference>
<dbReference type="GO" id="GO:0009734">
    <property type="term" value="P:auxin-activated signaling pathway"/>
    <property type="evidence" value="ECO:0007669"/>
    <property type="project" value="UniProtKB-KW"/>
</dbReference>
<dbReference type="GO" id="GO:0071365">
    <property type="term" value="P:cellular response to auxin stimulus"/>
    <property type="evidence" value="ECO:0000314"/>
    <property type="project" value="UniProtKB"/>
</dbReference>
<dbReference type="GO" id="GO:0010928">
    <property type="term" value="P:regulation of auxin mediated signaling pathway"/>
    <property type="evidence" value="ECO:0000315"/>
    <property type="project" value="UniProtKB"/>
</dbReference>
<dbReference type="GO" id="GO:0009733">
    <property type="term" value="P:response to auxin"/>
    <property type="evidence" value="ECO:0000315"/>
    <property type="project" value="UniProtKB"/>
</dbReference>
<dbReference type="GO" id="GO:0007165">
    <property type="term" value="P:signal transduction"/>
    <property type="evidence" value="ECO:0000315"/>
    <property type="project" value="UniProtKB"/>
</dbReference>
<dbReference type="CDD" id="cd06410">
    <property type="entry name" value="PB1_UP2"/>
    <property type="match status" value="1"/>
</dbReference>
<dbReference type="CDD" id="cd13999">
    <property type="entry name" value="STKc_MAP3K-like"/>
    <property type="match status" value="1"/>
</dbReference>
<dbReference type="FunFam" id="1.10.510.10:FF:000142">
    <property type="entry name" value="Octicosapeptide/phox/Bem1p domain kinase superfamily protein"/>
    <property type="match status" value="1"/>
</dbReference>
<dbReference type="FunFam" id="3.10.20.90:FF:000058">
    <property type="entry name" value="Octicosapeptide/phox/Bem1p domain kinase superfamily protein"/>
    <property type="match status" value="1"/>
</dbReference>
<dbReference type="FunFam" id="3.30.200.20:FF:000081">
    <property type="entry name" value="Octicosapeptide/phox/Bem1p domain kinase superfamily protein"/>
    <property type="match status" value="1"/>
</dbReference>
<dbReference type="Gene3D" id="3.10.20.90">
    <property type="entry name" value="Phosphatidylinositol 3-kinase Catalytic Subunit, Chain A, domain 1"/>
    <property type="match status" value="1"/>
</dbReference>
<dbReference type="Gene3D" id="3.30.200.20">
    <property type="entry name" value="Phosphorylase Kinase, domain 1"/>
    <property type="match status" value="1"/>
</dbReference>
<dbReference type="Gene3D" id="1.10.510.10">
    <property type="entry name" value="Transferase(Phosphotransferase) domain 1"/>
    <property type="match status" value="1"/>
</dbReference>
<dbReference type="InterPro" id="IPR011009">
    <property type="entry name" value="Kinase-like_dom_sf"/>
</dbReference>
<dbReference type="InterPro" id="IPR000270">
    <property type="entry name" value="PB1_dom"/>
</dbReference>
<dbReference type="InterPro" id="IPR000719">
    <property type="entry name" value="Prot_kinase_dom"/>
</dbReference>
<dbReference type="InterPro" id="IPR017441">
    <property type="entry name" value="Protein_kinase_ATP_BS"/>
</dbReference>
<dbReference type="InterPro" id="IPR001245">
    <property type="entry name" value="Ser-Thr/Tyr_kinase_cat_dom"/>
</dbReference>
<dbReference type="InterPro" id="IPR008271">
    <property type="entry name" value="Ser/Thr_kinase_AS"/>
</dbReference>
<dbReference type="InterPro" id="IPR050167">
    <property type="entry name" value="Ser_Thr_protein_kinase"/>
</dbReference>
<dbReference type="PANTHER" id="PTHR23257:SF868">
    <property type="entry name" value="KINASE SUPERFAMILY WITH OCTICOSAPEPTIDE_PHOX_BEM1P DOMAIN-CONTAINING PROTEIN"/>
    <property type="match status" value="1"/>
</dbReference>
<dbReference type="PANTHER" id="PTHR23257">
    <property type="entry name" value="SERINE-THREONINE PROTEIN KINASE"/>
    <property type="match status" value="1"/>
</dbReference>
<dbReference type="Pfam" id="PF00564">
    <property type="entry name" value="PB1"/>
    <property type="match status" value="1"/>
</dbReference>
<dbReference type="Pfam" id="PF07714">
    <property type="entry name" value="PK_Tyr_Ser-Thr"/>
    <property type="match status" value="1"/>
</dbReference>
<dbReference type="PRINTS" id="PR00109">
    <property type="entry name" value="TYRKINASE"/>
</dbReference>
<dbReference type="SMART" id="SM00666">
    <property type="entry name" value="PB1"/>
    <property type="match status" value="1"/>
</dbReference>
<dbReference type="SMART" id="SM00220">
    <property type="entry name" value="S_TKc"/>
    <property type="match status" value="1"/>
</dbReference>
<dbReference type="SUPFAM" id="SSF54277">
    <property type="entry name" value="CAD &amp; PB1 domains"/>
    <property type="match status" value="1"/>
</dbReference>
<dbReference type="SUPFAM" id="SSF56112">
    <property type="entry name" value="Protein kinase-like (PK-like)"/>
    <property type="match status" value="1"/>
</dbReference>
<dbReference type="PROSITE" id="PS00107">
    <property type="entry name" value="PROTEIN_KINASE_ATP"/>
    <property type="match status" value="1"/>
</dbReference>
<dbReference type="PROSITE" id="PS50011">
    <property type="entry name" value="PROTEIN_KINASE_DOM"/>
    <property type="match status" value="1"/>
</dbReference>
<dbReference type="PROSITE" id="PS00108">
    <property type="entry name" value="PROTEIN_KINASE_ST"/>
    <property type="match status" value="1"/>
</dbReference>
<sequence length="1257" mass="139705">MDQAKGYEHVRYTAPDPRDEGLGSINQRFSHDSSTNVNTYVRPPDYGVSTPARPVLNYSIQTGEEFAFEFMRDRVIMKPQFIPNVYGEHSGMPVSVNLSALGMVHPMSESGPNATVLNIEEKRQSFEHERKPPSRIEDKTYHELVQSAPVISSKNDTGQRRHSLVSSRASDSSLNRAKFLCSFGGKVIPRPRDQKLRYVGGETRIIRISKTISFQELMHKMKEIFPEARTIKYQLPGEDLDALVSVSSDEDLQNMMEECIVFGNGGSEKPRMFLFSSSDIEEAQFVMEHAEGDSEVQYVVAVNGMDLSSRRSSLGLSPPGNNLDELLHGNFDRKIDRAATEPAVASLTPLAGNESLPASQTSQPVTGFSTGNEPFSQPYLGQQLQFPGLGNHQIYTSGHMASIGYIDEKRSAPLHVQPQPHYIPYSVNPETPLESLVPHYPQKPEQGFLREEQIFHVQDPETSSKEAKMRRDDSFQKVNDHPISTVESNLSAKEPKMRRESSTPRVNEYPVSSMPSDLIVPDDLPKEEAPIVTQTSSSTPDPSSSTLSEKSLRKSEDHVENNLSAKEPKMRKEHSTTRVNEYSVSSVSSDSMVPDQALKEEAPISMKISNSTPDPKSLVYPEKSLRTSQEKTGAFDTTNEGMKKNQDNQFCLLGGFSVSGHGTSNNSSSNVSNFDQPVTQQRVFHSERTVRDPTETNRLSKSDDSLASQFVMAQTTSDAFLPISESSETSHEANMESQNVHPTAPVIPAPDSIWTAEGSMSQSEKKNVETNTPEHVSQTETSAKAVPQGHNEKGDIVVDINDRFPREFLADILKTKESLNFPGLGPLHADGAGVSLNIQNNDPKTWSYFRNLAQDEFERKDLSLMDQDHPGFPTSMTNTNGVPIDYSYPPLQSEKVASSQIHPQIHFDGNIKPDVSTITIPDLNTVDTQEDYSQSQIKGAESTDATLNAGVPLIDFMAADSGMRSLQVIKNDDLEELKELGSGTFGTVYHGKWRGTDVAIKRIKRSCFIGRSSEQERLTSEFWHEAEILSKLHHPNVMAFYGVVKDGPGGTLATVTEYMVNGSLRHVLLSNRHLDRRKRLIIAMDAAFGMEYLHSKSIVHFDLKCDNLLVNLKDPARPICKVGDFGLSKIKRNTLVTGGVRGTLPWMAPELLSGSSSKVSEKVDVFSFGIVLWEILTGEEPYANMHYGAIIGGIVNNTLRPTVPNYCDPEWRMLMEQCWAPDPFVRPAFPEIARRLRTMSSSAVHTKPHAVNHQIHK</sequence>
<evidence type="ECO:0000255" key="1">
    <source>
        <dbReference type="PROSITE-ProRule" id="PRU00159"/>
    </source>
</evidence>
<evidence type="ECO:0000255" key="2">
    <source>
        <dbReference type="PROSITE-ProRule" id="PRU01081"/>
    </source>
</evidence>
<evidence type="ECO:0000255" key="3">
    <source>
        <dbReference type="PROSITE-ProRule" id="PRU10027"/>
    </source>
</evidence>
<evidence type="ECO:0000255" key="4">
    <source>
        <dbReference type="PROSITE-ProRule" id="PRU10141"/>
    </source>
</evidence>
<evidence type="ECO:0000256" key="5">
    <source>
        <dbReference type="SAM" id="MobiDB-lite"/>
    </source>
</evidence>
<evidence type="ECO:0000269" key="6">
    <source>
    </source>
</evidence>
<evidence type="ECO:0000303" key="7">
    <source>
    </source>
</evidence>
<evidence type="ECO:0000303" key="8">
    <source>
    </source>
</evidence>
<evidence type="ECO:0000312" key="9">
    <source>
        <dbReference type="Araport" id="AT2G35050"/>
    </source>
</evidence>
<evidence type="ECO:0000312" key="10">
    <source>
        <dbReference type="EMBL" id="AAC12844.1"/>
    </source>
</evidence>
<protein>
    <recommendedName>
        <fullName evidence="8">RAF-like serine/threonine-protein kinase 24</fullName>
        <ecNumber evidence="3">2.7.11.1</ecNumber>
    </recommendedName>
    <alternativeName>
        <fullName evidence="7">Serine/threonine/Tyrosine protein kinase 2</fullName>
    </alternativeName>
</protein>
<reference key="1">
    <citation type="journal article" date="1999" name="Nature">
        <title>Sequence and analysis of chromosome 2 of the plant Arabidopsis thaliana.</title>
        <authorList>
            <person name="Lin X."/>
            <person name="Kaul S."/>
            <person name="Rounsley S.D."/>
            <person name="Shea T.P."/>
            <person name="Benito M.-I."/>
            <person name="Town C.D."/>
            <person name="Fujii C.Y."/>
            <person name="Mason T.M."/>
            <person name="Bowman C.L."/>
            <person name="Barnstead M.E."/>
            <person name="Feldblyum T.V."/>
            <person name="Buell C.R."/>
            <person name="Ketchum K.A."/>
            <person name="Lee J.J."/>
            <person name="Ronning C.M."/>
            <person name="Koo H.L."/>
            <person name="Moffat K.S."/>
            <person name="Cronin L.A."/>
            <person name="Shen M."/>
            <person name="Pai G."/>
            <person name="Van Aken S."/>
            <person name="Umayam L."/>
            <person name="Tallon L.J."/>
            <person name="Gill J.E."/>
            <person name="Adams M.D."/>
            <person name="Carrera A.J."/>
            <person name="Creasy T.H."/>
            <person name="Goodman H.M."/>
            <person name="Somerville C.R."/>
            <person name="Copenhaver G.P."/>
            <person name="Preuss D."/>
            <person name="Nierman W.C."/>
            <person name="White O."/>
            <person name="Eisen J.A."/>
            <person name="Salzberg S.L."/>
            <person name="Fraser C.M."/>
            <person name="Venter J.C."/>
        </authorList>
    </citation>
    <scope>NUCLEOTIDE SEQUENCE [LARGE SCALE GENOMIC DNA]</scope>
    <source>
        <strain>cv. Columbia</strain>
    </source>
</reference>
<reference key="2">
    <citation type="journal article" date="2017" name="Plant J.">
        <title>Araport11: a complete reannotation of the Arabidopsis thaliana reference genome.</title>
        <authorList>
            <person name="Cheng C.Y."/>
            <person name="Krishnakumar V."/>
            <person name="Chan A.P."/>
            <person name="Thibaud-Nissen F."/>
            <person name="Schobel S."/>
            <person name="Town C.D."/>
        </authorList>
    </citation>
    <scope>GENOME REANNOTATION</scope>
    <source>
        <strain>cv. Columbia</strain>
    </source>
</reference>
<reference key="3">
    <citation type="journal article" date="2006" name="Plant Mol. Biol.">
        <title>Genome-wide analysis and experimentation of plant serine/threonine/tyrosine-specific protein kinases.</title>
        <authorList>
            <person name="Rudrabhatla P."/>
            <person name="Reddy M.M."/>
            <person name="Rajasekharan R."/>
        </authorList>
    </citation>
    <scope>GENE FAMILY</scope>
    <scope>NOMENCLATURE</scope>
</reference>
<reference key="4">
    <citation type="journal article" date="2009" name="J. Proteomics">
        <title>Phosphoproteomic analysis of nuclei-enriched fractions from Arabidopsis thaliana.</title>
        <authorList>
            <person name="Jones A.M.E."/>
            <person name="MacLean D."/>
            <person name="Studholme D.J."/>
            <person name="Serna-Sanz A."/>
            <person name="Andreasson E."/>
            <person name="Rathjen J.P."/>
            <person name="Peck S.C."/>
        </authorList>
    </citation>
    <scope>IDENTIFICATION BY MASS SPECTROMETRY [LARGE SCALE ANALYSIS]</scope>
</reference>
<reference key="5">
    <citation type="journal article" date="2009" name="Plant Physiol.">
        <title>Large-scale Arabidopsis phosphoproteome profiling reveals novel chloroplast kinase substrates and phosphorylation networks.</title>
        <authorList>
            <person name="Reiland S."/>
            <person name="Messerli G."/>
            <person name="Baerenfaller K."/>
            <person name="Gerrits B."/>
            <person name="Endler A."/>
            <person name="Grossmann J."/>
            <person name="Gruissem W."/>
            <person name="Baginsky S."/>
        </authorList>
    </citation>
    <scope>IDENTIFICATION BY MASS SPECTROMETRY [LARGE SCALE ANALYSIS]</scope>
</reference>
<reference key="6">
    <citation type="journal article" date="2024" name="Cell">
        <title>RAF-like protein kinases mediate a deeply conserved, rapid auxin response.</title>
        <authorList>
            <person name="Kuhn A."/>
            <person name="Roosjen M."/>
            <person name="Mutte S."/>
            <person name="Dubey S.M."/>
            <person name="Carrillo Carrasco V.P."/>
            <person name="Boeren S."/>
            <person name="Monzer A."/>
            <person name="Koehorst J."/>
            <person name="Kohchi T."/>
            <person name="Nishihama R."/>
            <person name="Fendrych M."/>
            <person name="Sprakel J."/>
            <person name="Friml J."/>
            <person name="Weijers D."/>
        </authorList>
    </citation>
    <scope>FUNCTION</scope>
    <scope>DISRUPTION PHENOTYPE</scope>
    <scope>ACTIVITY REGULATION</scope>
    <scope>INDUCTION BY AUXIN</scope>
    <scope>SUBCELLULAR LOCATION</scope>
    <scope>PHOSPHORYLATION AT SER-474; SER-555; SER-777 AND SER-1013</scope>
    <source>
        <strain>cv. Columbia</strain>
        <tissue>Root</tissue>
    </source>
</reference>
<comment type="function">
    <text evidence="6">RAF-like protein kinase acting, together with RAF20, as a central mediator of a fast response pathway to auxin involving proteins phosphorylation, and leading to rapid cellular responses including membrane depolarization and cytoplasmic streaming (PubMed:38128538). Required for general growth and developmental process (PubMed:38128538).</text>
</comment>
<comment type="catalytic activity">
    <reaction evidence="3">
        <text>L-seryl-[protein] + ATP = O-phospho-L-seryl-[protein] + ADP + H(+)</text>
        <dbReference type="Rhea" id="RHEA:17989"/>
        <dbReference type="Rhea" id="RHEA-COMP:9863"/>
        <dbReference type="Rhea" id="RHEA-COMP:11604"/>
        <dbReference type="ChEBI" id="CHEBI:15378"/>
        <dbReference type="ChEBI" id="CHEBI:29999"/>
        <dbReference type="ChEBI" id="CHEBI:30616"/>
        <dbReference type="ChEBI" id="CHEBI:83421"/>
        <dbReference type="ChEBI" id="CHEBI:456216"/>
        <dbReference type="EC" id="2.7.11.1"/>
    </reaction>
</comment>
<comment type="catalytic activity">
    <reaction evidence="3">
        <text>L-threonyl-[protein] + ATP = O-phospho-L-threonyl-[protein] + ADP + H(+)</text>
        <dbReference type="Rhea" id="RHEA:46608"/>
        <dbReference type="Rhea" id="RHEA-COMP:11060"/>
        <dbReference type="Rhea" id="RHEA-COMP:11605"/>
        <dbReference type="ChEBI" id="CHEBI:15378"/>
        <dbReference type="ChEBI" id="CHEBI:30013"/>
        <dbReference type="ChEBI" id="CHEBI:30616"/>
        <dbReference type="ChEBI" id="CHEBI:61977"/>
        <dbReference type="ChEBI" id="CHEBI:456216"/>
        <dbReference type="EC" id="2.7.11.1"/>
    </reaction>
</comment>
<comment type="activity regulation">
    <text evidence="6">Activated by auxin via rapid phosphorylation downstream of ABP1 and TMK1 signaling.</text>
</comment>
<comment type="subcellular location">
    <subcellularLocation>
        <location evidence="6">Cytoplasm</location>
    </subcellularLocation>
    <text evidence="6">Broadly distributed to both membrane-associated and intracellular punctate structures.</text>
</comment>
<comment type="PTM">
    <text evidence="6">Hyperphosphorylated in response to auxin in an ABP1- and TMK1-dependent manner.</text>
</comment>
<comment type="disruption phenotype">
    <text evidence="6">Plants lacking RAF-like kinases exhibit growth and developmental phenotypes such as defects in plant height, rosette area, root growth and germination (PubMed:38128538). Reduced root sensitivity to auxin-mediated growth inhibition and slightly delayed gravitropic response in response to auxin associated with a drastic reduction of auxin-triggered hyperphosphorylated proteins, but no obvious defect in auxin-induced genes transcription (PubMed:38128538). Insensitivity to the promoting effect of auxin on cytoplasmic streaming in root epidermal cells (PubMed:38128538).</text>
</comment>
<comment type="similarity">
    <text evidence="1">Belongs to the protein kinase superfamily. Ser/Thr protein kinase family.</text>
</comment>
<gene>
    <name evidence="8" type="primary">RAF24</name>
    <name evidence="7" type="synonym">STY2</name>
    <name evidence="9" type="ordered locus">At2g35050</name>
    <name evidence="10" type="ORF">F19I3.28</name>
</gene>